<reference key="1">
    <citation type="journal article" date="1999" name="Trends Pharmacol. Sci.">
        <title>A unified nomenclature for short-chain peptides isolated from scorpion venoms: alpha-KTx molecular subfamilies.</title>
        <authorList>
            <person name="Tytgat J."/>
            <person name="Chandy K.G."/>
            <person name="Garcia M.L."/>
            <person name="Gutman G.A."/>
            <person name="Martin-Eauclaire M.-F."/>
            <person name="van der Walt J.J."/>
            <person name="Possani L.D."/>
        </authorList>
    </citation>
    <scope>PROTEIN SEQUENCE</scope>
    <scope>SUBCELLULAR LOCATION</scope>
    <scope>REVIEW</scope>
    <scope>NOMENCLATURE</scope>
    <source>
        <tissue>Venom</tissue>
    </source>
</reference>
<reference key="2">
    <citation type="journal article" date="2004" name="J. Biol. Chem.">
        <title>A subfamily of acidic alpha-K(+) toxins.</title>
        <authorList>
            <person name="Huys I."/>
            <person name="Olamendi-Portugal T."/>
            <person name="Garcia-Gomez B.I."/>
            <person name="Vandenberghe I."/>
            <person name="Van Beeumen J."/>
            <person name="Dyason K."/>
            <person name="Clynen E."/>
            <person name="Zhu S."/>
            <person name="van der Walt J."/>
            <person name="Possani L.D."/>
            <person name="Tytgat J."/>
        </authorList>
    </citation>
    <scope>FUNCTION</scope>
    <scope>MUTAGENESIS OF THR-24 AND VAL-26</scope>
</reference>
<reference key="3">
    <citation type="journal article" date="2012" name="PLoS ONE">
        <title>Structural and functional diversity of acidic scorpion potassium channel toxins.</title>
        <authorList>
            <person name="Chen Z.Y."/>
            <person name="Zeng D.Y."/>
            <person name="Hu Y.T."/>
            <person name="He Y.W."/>
            <person name="Pan N."/>
            <person name="Ding J.P."/>
            <person name="Cao Z.J."/>
            <person name="Liu M.L."/>
            <person name="Li W.X."/>
            <person name="Yi H."/>
            <person name="Jiang L."/>
            <person name="Wu Y.L."/>
        </authorList>
    </citation>
    <scope>FUNCTION ON KV7.1/KCNQ1 CHANNELS</scope>
</reference>
<proteinExistence type="evidence at protein level"/>
<name>KA111_PARVI</name>
<protein>
    <recommendedName>
        <fullName evidence="5 6">Potassium channel toxin alpha-KTx 11.1</fullName>
    </recommendedName>
    <alternativeName>
        <fullName evidence="5 6">Parabutoxin-1</fullName>
        <shortName evidence="5 6">PBTx1</shortName>
    </alternativeName>
</protein>
<evidence type="ECO:0000255" key="1">
    <source>
        <dbReference type="PROSITE-ProRule" id="PRU01209"/>
    </source>
</evidence>
<evidence type="ECO:0000269" key="2">
    <source>
    </source>
</evidence>
<evidence type="ECO:0000269" key="3">
    <source>
    </source>
</evidence>
<evidence type="ECO:0000269" key="4">
    <source>
    </source>
</evidence>
<evidence type="ECO:0000303" key="5">
    <source>
    </source>
</evidence>
<evidence type="ECO:0000303" key="6">
    <source>
    </source>
</evidence>
<evidence type="ECO:0000305" key="7"/>
<evidence type="ECO:0000305" key="8">
    <source>
    </source>
</evidence>
<keyword id="KW-0903">Direct protein sequencing</keyword>
<keyword id="KW-1015">Disulfide bond</keyword>
<keyword id="KW-0872">Ion channel impairing toxin</keyword>
<keyword id="KW-0528">Neurotoxin</keyword>
<keyword id="KW-0632">Potassium channel impairing toxin</keyword>
<keyword id="KW-0964">Secreted</keyword>
<keyword id="KW-0800">Toxin</keyword>
<keyword id="KW-1220">Voltage-gated potassium channel impairing toxin</keyword>
<sequence>DEEPKESCSDEMCVIYCKGEEYSTGVCDGPQKCKCSD</sequence>
<comment type="function">
    <text evidence="3 4">Binds and inhibits voltage-sensitive potassium channels. Inhibits the vertebrate potassium channels Kv1.1/KCNA1, Kv1.2/KCNA2 and Kv1.3/KCNA3 with low affinity. Also weakly inhibits Kv7.1/KCNQ1 (10 uM of the toxin inhibits currents by 21.43%) (PubMed:22511981).</text>
</comment>
<comment type="subcellular location">
    <subcellularLocation>
        <location evidence="2">Secreted</location>
    </subcellularLocation>
</comment>
<comment type="tissue specificity">
    <text evidence="8">Expressed by the venom gland.</text>
</comment>
<comment type="domain">
    <text evidence="7">Has the structural arrangement of an alpha-helix connected to antiparallel beta-sheets by disulfide bonds (CS-alpha/beta).</text>
</comment>
<comment type="similarity">
    <text evidence="7">Belongs to the short scorpion toxin superfamily. Potassium channel inhibitor family. Alpha-KTx 11 subfamily.</text>
</comment>
<feature type="peptide" id="PRO_0000044915" description="Potassium channel toxin alpha-KTx 11.1" evidence="2">
    <location>
        <begin position="1"/>
        <end position="37"/>
    </location>
</feature>
<feature type="disulfide bond" evidence="1">
    <location>
        <begin position="8"/>
        <end position="27"/>
    </location>
</feature>
<feature type="disulfide bond" evidence="1">
    <location>
        <begin position="13"/>
        <end position="33"/>
    </location>
</feature>
<feature type="disulfide bond" evidence="1">
    <location>
        <begin position="17"/>
        <end position="35"/>
    </location>
</feature>
<feature type="mutagenesis site" description="Increased affinity towards Kv1.1, Kv1.2 and Kv1.3 channels." evidence="3">
    <original>T</original>
    <variation>F</variation>
    <location>
        <position position="24"/>
    </location>
</feature>
<feature type="mutagenesis site" description="Increased affinity towards Kv1.1, Kv1.2 and Kv1.3 channels." evidence="3">
    <original>V</original>
    <variation>K</variation>
    <location>
        <position position="26"/>
    </location>
</feature>
<dbReference type="SMR" id="P60164"/>
<dbReference type="GO" id="GO:0005576">
    <property type="term" value="C:extracellular region"/>
    <property type="evidence" value="ECO:0000314"/>
    <property type="project" value="UniProtKB"/>
</dbReference>
<dbReference type="GO" id="GO:0019870">
    <property type="term" value="F:potassium channel inhibitor activity"/>
    <property type="evidence" value="ECO:0000314"/>
    <property type="project" value="UniProtKB"/>
</dbReference>
<dbReference type="GO" id="GO:0090729">
    <property type="term" value="F:toxin activity"/>
    <property type="evidence" value="ECO:0000314"/>
    <property type="project" value="UniProtKB"/>
</dbReference>
<dbReference type="GO" id="GO:0044562">
    <property type="term" value="P:envenomation resulting in negative regulation of voltage-gated potassium channel activity in another organism"/>
    <property type="evidence" value="ECO:0000314"/>
    <property type="project" value="UniProtKB"/>
</dbReference>
<dbReference type="InterPro" id="IPR012635">
    <property type="entry name" value="Parabutoxin"/>
</dbReference>
<dbReference type="Pfam" id="PF08119">
    <property type="entry name" value="Toxin_31"/>
    <property type="match status" value="1"/>
</dbReference>
<accession>P60164</accession>
<organism>
    <name type="scientific">Parabuthus villosus</name>
    <name type="common">Black hairy thick-tailed scorpion</name>
    <dbReference type="NCBI Taxonomy" id="252780"/>
    <lineage>
        <taxon>Eukaryota</taxon>
        <taxon>Metazoa</taxon>
        <taxon>Ecdysozoa</taxon>
        <taxon>Arthropoda</taxon>
        <taxon>Chelicerata</taxon>
        <taxon>Arachnida</taxon>
        <taxon>Scorpiones</taxon>
        <taxon>Buthida</taxon>
        <taxon>Buthoidea</taxon>
        <taxon>Buthidae</taxon>
        <taxon>Parabuthus</taxon>
    </lineage>
</organism>